<protein>
    <recommendedName>
        <fullName evidence="2">Envelope glycoprotein L</fullName>
        <shortName evidence="2">gL</shortName>
    </recommendedName>
</protein>
<proteinExistence type="inferred from homology"/>
<reference key="1">
    <citation type="submission" date="1998-08" db="EMBL/GenBank/DDBJ databases">
        <title>GPCMV glycoprotein L gene.</title>
        <authorList>
            <person name="Schleiss M.R."/>
            <person name="Paglino J.C."/>
            <person name="Brady R.C."/>
        </authorList>
    </citation>
    <scope>NUCLEOTIDE SEQUENCE [GENOMIC DNA]</scope>
</reference>
<reference key="2">
    <citation type="journal article" date="2008" name="Virol. J.">
        <title>Analysis of the nucleotide sequence of the guinea pig cytomegalovirus (GPCMV) genome.</title>
        <authorList>
            <person name="Schleiss M.R."/>
            <person name="McGregor A."/>
            <person name="Choi K.Y."/>
            <person name="Date S.V."/>
            <person name="Cui X."/>
            <person name="McVoy M.A."/>
        </authorList>
    </citation>
    <scope>NUCLEOTIDE SEQUENCE [LARGE SCALE GENOMIC DNA]</scope>
</reference>
<reference key="3">
    <citation type="journal article" date="2011" name="J. Gen. Virol.">
        <title>Re-evaluation of the genome sequence of guinea pig cytomegalovirus.</title>
        <authorList>
            <person name="Kanai K."/>
            <person name="Yamada S."/>
            <person name="Yamamoto Y."/>
            <person name="Fukui Y."/>
            <person name="Kurane I."/>
            <person name="Inoue N."/>
        </authorList>
    </citation>
    <scope>NUCLEOTIDE SEQUENCE [LARGE SCALE GENOMIC DNA]</scope>
    <source>
        <strain>22122/ATCC-P5</strain>
    </source>
</reference>
<reference key="4">
    <citation type="journal article" date="2013" name="Genome Announc.">
        <title>Complete genome sequence of pathogenic Guinea pig cytomegalovirus from salivary gland homogenates of infected animals.</title>
        <authorList>
            <person name="Yang D."/>
            <person name="Tamburro K."/>
            <person name="Dittmer D."/>
            <person name="Cui X."/>
            <person name="McVoy M.A."/>
            <person name="Hernandez-Alvarado N."/>
            <person name="Schleiss M.R."/>
        </authorList>
    </citation>
    <scope>NUCLEOTIDE SEQUENCE [LARGE SCALE GENOMIC DNA]</scope>
    <source>
        <strain>22122</strain>
    </source>
</reference>
<organism>
    <name type="scientific">Guinea pig cytomegalovirus (strain 22122)</name>
    <name type="common">GPCMV</name>
    <dbReference type="NCBI Taxonomy" id="103920"/>
    <lineage>
        <taxon>Viruses</taxon>
        <taxon>Duplodnaviria</taxon>
        <taxon>Heunggongvirae</taxon>
        <taxon>Peploviricota</taxon>
        <taxon>Herviviricetes</taxon>
        <taxon>Herpesvirales</taxon>
        <taxon>Orthoherpesviridae</taxon>
        <taxon>Betaherpesvirinae</taxon>
        <taxon>Quwivirus</taxon>
        <taxon>Quwivirus caviidbeta2</taxon>
    </lineage>
</organism>
<name>GL_GPCMV</name>
<comment type="function">
    <text evidence="1 2">The heterodimer glycoprotein H-glycoprotein L is required for the fusion of viral and plasma membranes leading to virus entry into the host cell. Acts as a functional inhibitor of gH and maintains gH in an inhibited form. Upon binding to host integrins, gL dissociates from gH leading to activation of the viral fusion glycoproteins gB and gH (By similarity). In human cytomegalovirus, forms two distincts complexes to mediate viral entry, a trimer and a pentamer at the surface of the virion envelope. The gH-gL-gO trimer is required for infection in fibroblasts by interacting with host PDGFRA. The gH-gL-UL128-UL130-UL131A pentamer is essential for viral entry in epithelial, endothelial and myeloid cells via interaction with host NRP2 (By similarity).</text>
</comment>
<comment type="subunit">
    <text evidence="1 2">Interacts with glycoprotein H (gH); this interaction is necessary for the correct processing and cell surface expression of gH (By similarity). Forms the envelope pentamer complex (PC) composed of gH, gL, UL128, UL130, and UL131A. The pentamer interacts with host NRP2. Forms the envelope trimer complex composed of gH, gL, and gO. The trimer interacts with host PDGFRA (By similarity).</text>
</comment>
<comment type="subcellular location">
    <subcellularLocation>
        <location evidence="2">Virion membrane</location>
        <topology evidence="2">Peripheral membrane protein</topology>
        <orientation evidence="2">Extracellular side</orientation>
    </subcellularLocation>
    <subcellularLocation>
        <location evidence="2">Host cell membrane</location>
        <topology evidence="2">Peripheral membrane protein</topology>
        <orientation evidence="2">Extracellular side</orientation>
    </subcellularLocation>
    <subcellularLocation>
        <location evidence="2">Host Golgi apparatus</location>
        <location evidence="2">Host trans-Golgi network</location>
    </subcellularLocation>
    <text evidence="2">gL associates with the extravirion surface through its binding to gH. During virion morphogenesis, this protein probably accumulates in the host trans-Golgi where secondary envelopment occurs.</text>
</comment>
<comment type="similarity">
    <text evidence="3">Belongs to the herpesviridae glycoprotein L (gL) family. Betaherpesvirinae gL subfamily.</text>
</comment>
<sequence>MYECMFFSHRLTIGFYIPLIVLTTMSSLSESLGERQKTACTVAAISCANSDTYNRTTVSNHTFFYISDRWKYSELIRYEKPTGDLRHDKLIHVDREFLDIVSLLHNNENQLRTLLTIFRSDSAPPWVKFMRGYSQCLDHPIIYTCVEEKCQQYNLEELPYGKDIFLENVVGFDLGAPPHNMSVLIAVSNTKPKITKVLRITSTSLTLFDALYNTVLTFFRSIGARNVDVVRRLILYQASLSGPHRDAPIHNYLNRDLS</sequence>
<organismHost>
    <name type="scientific">Cavia porcellus</name>
    <name type="common">Guinea pig</name>
    <dbReference type="NCBI Taxonomy" id="10141"/>
</organismHost>
<feature type="signal peptide" evidence="2">
    <location>
        <begin position="1"/>
        <end position="31"/>
    </location>
</feature>
<feature type="chain" id="PRO_0000038277" description="Envelope glycoprotein L" evidence="2">
    <location>
        <begin position="32"/>
        <end position="258"/>
    </location>
</feature>
<feature type="domain" description="gL betaherpesvirus-type" evidence="3">
    <location>
        <begin position="36"/>
        <end position="243"/>
    </location>
</feature>
<feature type="disulfide bond" description="Interchain" evidence="3">
    <location>
        <position position="40"/>
    </location>
</feature>
<feature type="disulfide bond" description="Interchain" evidence="3">
    <location>
        <position position="47"/>
    </location>
</feature>
<feature type="disulfide bond" description="Interchain" evidence="3">
    <location>
        <position position="136"/>
    </location>
</feature>
<feature type="disulfide bond" evidence="3">
    <location>
        <begin position="145"/>
        <end position="150"/>
    </location>
</feature>
<gene>
    <name evidence="2" type="primary">gL</name>
    <name type="ORF">UL115</name>
</gene>
<accession>O92277</accession>
<accession>B7TQ11</accession>
<accession>E9RHB4</accession>
<evidence type="ECO:0000250" key="1">
    <source>
        <dbReference type="UniProtKB" id="F5HCH8"/>
    </source>
</evidence>
<evidence type="ECO:0000255" key="2">
    <source>
        <dbReference type="HAMAP-Rule" id="MF_04036"/>
    </source>
</evidence>
<evidence type="ECO:0000255" key="3">
    <source>
        <dbReference type="PROSITE-ProRule" id="PRU01369"/>
    </source>
</evidence>
<dbReference type="EMBL" id="KC503762">
    <property type="protein sequence ID" value="AGE11578.1"/>
    <property type="molecule type" value="Genomic_DNA"/>
</dbReference>
<dbReference type="EMBL" id="AB592928">
    <property type="protein sequence ID" value="BAJ78566.1"/>
    <property type="molecule type" value="Genomic_DNA"/>
</dbReference>
<dbReference type="SMR" id="O92277"/>
<dbReference type="KEGG" id="vg:14536701"/>
<dbReference type="Proteomes" id="UP000102041">
    <property type="component" value="Segment"/>
</dbReference>
<dbReference type="Proteomes" id="UP000132784">
    <property type="component" value="Segment"/>
</dbReference>
<dbReference type="GO" id="GO:0044177">
    <property type="term" value="C:host cell Golgi apparatus"/>
    <property type="evidence" value="ECO:0007669"/>
    <property type="project" value="UniProtKB-SubCell"/>
</dbReference>
<dbReference type="GO" id="GO:0020002">
    <property type="term" value="C:host cell plasma membrane"/>
    <property type="evidence" value="ECO:0007669"/>
    <property type="project" value="UniProtKB-SubCell"/>
</dbReference>
<dbReference type="GO" id="GO:0016020">
    <property type="term" value="C:membrane"/>
    <property type="evidence" value="ECO:0007669"/>
    <property type="project" value="UniProtKB-KW"/>
</dbReference>
<dbReference type="GO" id="GO:0019031">
    <property type="term" value="C:viral envelope"/>
    <property type="evidence" value="ECO:0007669"/>
    <property type="project" value="UniProtKB-UniRule"/>
</dbReference>
<dbReference type="GO" id="GO:0055036">
    <property type="term" value="C:virion membrane"/>
    <property type="evidence" value="ECO:0007669"/>
    <property type="project" value="UniProtKB-SubCell"/>
</dbReference>
<dbReference type="GO" id="GO:0098670">
    <property type="term" value="P:entry receptor-mediated virion attachment to host cell"/>
    <property type="evidence" value="ECO:0007669"/>
    <property type="project" value="UniProtKB-KW"/>
</dbReference>
<dbReference type="GO" id="GO:0019064">
    <property type="term" value="P:fusion of virus membrane with host plasma membrane"/>
    <property type="evidence" value="ECO:0007669"/>
    <property type="project" value="UniProtKB-UniRule"/>
</dbReference>
<dbReference type="GO" id="GO:0046718">
    <property type="term" value="P:symbiont entry into host cell"/>
    <property type="evidence" value="ECO:0007669"/>
    <property type="project" value="UniProtKB-KW"/>
</dbReference>
<dbReference type="HAMAP" id="MF_04036">
    <property type="entry name" value="HSV_GL_betahv"/>
    <property type="match status" value="1"/>
</dbReference>
<dbReference type="InterPro" id="IPR002689">
    <property type="entry name" value="Cytomegalo_gL"/>
</dbReference>
<dbReference type="Pfam" id="PF01801">
    <property type="entry name" value="Cytomega_gL"/>
    <property type="match status" value="1"/>
</dbReference>
<dbReference type="PROSITE" id="PS52025">
    <property type="entry name" value="GL_BHV"/>
    <property type="match status" value="1"/>
</dbReference>
<keyword id="KW-1015">Disulfide bond</keyword>
<keyword id="KW-1169">Fusion of virus membrane with host cell membrane</keyword>
<keyword id="KW-1168">Fusion of virus membrane with host membrane</keyword>
<keyword id="KW-0325">Glycoprotein</keyword>
<keyword id="KW-1032">Host cell membrane</keyword>
<keyword id="KW-1040">Host Golgi apparatus</keyword>
<keyword id="KW-1043">Host membrane</keyword>
<keyword id="KW-0945">Host-virus interaction</keyword>
<keyword id="KW-0472">Membrane</keyword>
<keyword id="KW-1185">Reference proteome</keyword>
<keyword id="KW-0732">Signal</keyword>
<keyword id="KW-1161">Viral attachment to host cell</keyword>
<keyword id="KW-1234">Viral attachment to host entry receptor</keyword>
<keyword id="KW-0261">Viral envelope protein</keyword>
<keyword id="KW-1162">Viral penetration into host cytoplasm</keyword>
<keyword id="KW-0946">Virion</keyword>
<keyword id="KW-1160">Virus entry into host cell</keyword>